<feature type="chain" id="PRO_1000019381" description="Ferrochelatase">
    <location>
        <begin position="1"/>
        <end position="391"/>
    </location>
</feature>
<feature type="binding site" evidence="1">
    <location>
        <position position="196"/>
    </location>
    <ligand>
        <name>Fe cation</name>
        <dbReference type="ChEBI" id="CHEBI:24875"/>
    </ligand>
</feature>
<feature type="binding site" evidence="1">
    <location>
        <position position="281"/>
    </location>
    <ligand>
        <name>Fe cation</name>
        <dbReference type="ChEBI" id="CHEBI:24875"/>
    </ligand>
</feature>
<accession>Q3ALP2</accession>
<name>HEMH_SYNSC</name>
<reference key="1">
    <citation type="submission" date="2005-07" db="EMBL/GenBank/DDBJ databases">
        <title>Complete sequence of Synechococcus sp. CC9605.</title>
        <authorList>
            <consortium name="US DOE Joint Genome Institute"/>
            <person name="Copeland A."/>
            <person name="Lucas S."/>
            <person name="Lapidus A."/>
            <person name="Barry K."/>
            <person name="Detter J.C."/>
            <person name="Glavina T."/>
            <person name="Hammon N."/>
            <person name="Israni S."/>
            <person name="Pitluck S."/>
            <person name="Schmutz J."/>
            <person name="Martinez M."/>
            <person name="Larimer F."/>
            <person name="Land M."/>
            <person name="Kyrpides N."/>
            <person name="Ivanova N."/>
            <person name="Richardson P."/>
        </authorList>
    </citation>
    <scope>NUCLEOTIDE SEQUENCE [LARGE SCALE GENOMIC DNA]</scope>
    <source>
        <strain>CC9605</strain>
    </source>
</reference>
<keyword id="KW-0963">Cytoplasm</keyword>
<keyword id="KW-0350">Heme biosynthesis</keyword>
<keyword id="KW-0408">Iron</keyword>
<keyword id="KW-0456">Lyase</keyword>
<keyword id="KW-0479">Metal-binding</keyword>
<keyword id="KW-0627">Porphyrin biosynthesis</keyword>
<evidence type="ECO:0000255" key="1">
    <source>
        <dbReference type="HAMAP-Rule" id="MF_00323"/>
    </source>
</evidence>
<organism>
    <name type="scientific">Synechococcus sp. (strain CC9605)</name>
    <dbReference type="NCBI Taxonomy" id="110662"/>
    <lineage>
        <taxon>Bacteria</taxon>
        <taxon>Bacillati</taxon>
        <taxon>Cyanobacteriota</taxon>
        <taxon>Cyanophyceae</taxon>
        <taxon>Synechococcales</taxon>
        <taxon>Synechococcaceae</taxon>
        <taxon>Synechococcus</taxon>
    </lineage>
</organism>
<gene>
    <name evidence="1" type="primary">hemH</name>
    <name type="ordered locus">Syncc9605_0716</name>
</gene>
<dbReference type="EC" id="4.98.1.1" evidence="1"/>
<dbReference type="EMBL" id="CP000110">
    <property type="protein sequence ID" value="ABB34490.1"/>
    <property type="molecule type" value="Genomic_DNA"/>
</dbReference>
<dbReference type="RefSeq" id="WP_011363718.1">
    <property type="nucleotide sequence ID" value="NC_007516.1"/>
</dbReference>
<dbReference type="SMR" id="Q3ALP2"/>
<dbReference type="STRING" id="110662.Syncc9605_0716"/>
<dbReference type="KEGG" id="syd:Syncc9605_0716"/>
<dbReference type="eggNOG" id="COG0276">
    <property type="taxonomic scope" value="Bacteria"/>
</dbReference>
<dbReference type="HOGENOM" id="CLU_018884_4_3_3"/>
<dbReference type="OrthoDB" id="9809741at2"/>
<dbReference type="UniPathway" id="UPA00252">
    <property type="reaction ID" value="UER00325"/>
</dbReference>
<dbReference type="GO" id="GO:0005737">
    <property type="term" value="C:cytoplasm"/>
    <property type="evidence" value="ECO:0007669"/>
    <property type="project" value="UniProtKB-SubCell"/>
</dbReference>
<dbReference type="GO" id="GO:0004325">
    <property type="term" value="F:ferrochelatase activity"/>
    <property type="evidence" value="ECO:0007669"/>
    <property type="project" value="UniProtKB-UniRule"/>
</dbReference>
<dbReference type="GO" id="GO:0046872">
    <property type="term" value="F:metal ion binding"/>
    <property type="evidence" value="ECO:0007669"/>
    <property type="project" value="UniProtKB-KW"/>
</dbReference>
<dbReference type="GO" id="GO:0006783">
    <property type="term" value="P:heme biosynthetic process"/>
    <property type="evidence" value="ECO:0007669"/>
    <property type="project" value="UniProtKB-UniRule"/>
</dbReference>
<dbReference type="CDD" id="cd00419">
    <property type="entry name" value="Ferrochelatase_C"/>
    <property type="match status" value="1"/>
</dbReference>
<dbReference type="CDD" id="cd03411">
    <property type="entry name" value="Ferrochelatase_N"/>
    <property type="match status" value="1"/>
</dbReference>
<dbReference type="FunFam" id="3.40.50.1400:FF:000006">
    <property type="entry name" value="Ferrochelatase"/>
    <property type="match status" value="1"/>
</dbReference>
<dbReference type="Gene3D" id="3.40.50.1400">
    <property type="match status" value="2"/>
</dbReference>
<dbReference type="HAMAP" id="MF_00323">
    <property type="entry name" value="Ferrochelatase"/>
    <property type="match status" value="1"/>
</dbReference>
<dbReference type="InterPro" id="IPR001015">
    <property type="entry name" value="Ferrochelatase"/>
</dbReference>
<dbReference type="InterPro" id="IPR019772">
    <property type="entry name" value="Ferrochelatase_AS"/>
</dbReference>
<dbReference type="InterPro" id="IPR033644">
    <property type="entry name" value="Ferrochelatase_C"/>
</dbReference>
<dbReference type="InterPro" id="IPR033659">
    <property type="entry name" value="Ferrochelatase_N"/>
</dbReference>
<dbReference type="NCBIfam" id="TIGR00109">
    <property type="entry name" value="hemH"/>
    <property type="match status" value="1"/>
</dbReference>
<dbReference type="PANTHER" id="PTHR11108">
    <property type="entry name" value="FERROCHELATASE"/>
    <property type="match status" value="1"/>
</dbReference>
<dbReference type="PANTHER" id="PTHR11108:SF1">
    <property type="entry name" value="FERROCHELATASE, MITOCHONDRIAL"/>
    <property type="match status" value="1"/>
</dbReference>
<dbReference type="Pfam" id="PF00762">
    <property type="entry name" value="Ferrochelatase"/>
    <property type="match status" value="1"/>
</dbReference>
<dbReference type="SUPFAM" id="SSF53800">
    <property type="entry name" value="Chelatase"/>
    <property type="match status" value="1"/>
</dbReference>
<dbReference type="SUPFAM" id="SSF103511">
    <property type="entry name" value="Chlorophyll a-b binding protein"/>
    <property type="match status" value="1"/>
</dbReference>
<dbReference type="PROSITE" id="PS00534">
    <property type="entry name" value="FERROCHELATASE"/>
    <property type="match status" value="1"/>
</dbReference>
<sequence>MSRVGVVLLNLGGPERIQDVGPFLYNLFADPEIIRLPSPALQKPLAWLISTLRSGKSQEAYRSIGGGSPLRRITEQQARELQSLLRQRGIDATSYVAMRYWHPFTESAVADIKADGMDEVVVLPLYPHFSISTSGSSFRELQRLRQADPAFEKLPIRCIRSWFDHPGYVKAMAELIAAEVRNSDDPTKAHVFFSAHGVPKSYVEEAGDPYQKEIETCTGLIMKELAVQMGHDNPFTLAYQSRVGPVEWLKPYTEEALEELGQAKTNDLVVVPISFVSEHIETLEEIDIEYRELATEAGVVNFRRVRALDTYAPFIEGLADLVATSLQGPEVSLDAAAELPNKVKLYPQEKWEWGWNNSSEVWNGRLAMVGFSAFLLELISGQGPLHALGLL</sequence>
<protein>
    <recommendedName>
        <fullName evidence="1">Ferrochelatase</fullName>
        <ecNumber evidence="1">4.98.1.1</ecNumber>
    </recommendedName>
    <alternativeName>
        <fullName evidence="1">Heme synthase</fullName>
    </alternativeName>
    <alternativeName>
        <fullName evidence="1">Protoheme ferro-lyase</fullName>
    </alternativeName>
</protein>
<proteinExistence type="inferred from homology"/>
<comment type="function">
    <text evidence="1">Catalyzes the ferrous insertion into protoporphyrin IX.</text>
</comment>
<comment type="catalytic activity">
    <reaction evidence="1">
        <text>heme b + 2 H(+) = protoporphyrin IX + Fe(2+)</text>
        <dbReference type="Rhea" id="RHEA:22584"/>
        <dbReference type="ChEBI" id="CHEBI:15378"/>
        <dbReference type="ChEBI" id="CHEBI:29033"/>
        <dbReference type="ChEBI" id="CHEBI:57306"/>
        <dbReference type="ChEBI" id="CHEBI:60344"/>
        <dbReference type="EC" id="4.98.1.1"/>
    </reaction>
</comment>
<comment type="pathway">
    <text evidence="1">Porphyrin-containing compound metabolism; protoheme biosynthesis; protoheme from protoporphyrin-IX: step 1/1.</text>
</comment>
<comment type="subcellular location">
    <subcellularLocation>
        <location evidence="1">Cytoplasm</location>
    </subcellularLocation>
</comment>
<comment type="similarity">
    <text evidence="1">Belongs to the ferrochelatase family.</text>
</comment>